<comment type="function">
    <text evidence="2 4">Catalyzes the hydrolysis of ATP coupled with the transport of calcium from the cytoplasm to the extracellular space thereby maintaining intracellular calcium homeostasis. Plays a role in blood pressure regulation through regulation of intracellular calcium concentration and nitric oxide production leading to regulation of vascular smooth muscle cells vasoconstriction. Positively regulates bone mineralization through absorption of calcium from the intestine. Plays dual roles in osteoclast differentiation and survival by regulating RANKL-induced calcium oscillations in preosteoclasts and mediating calcium extrusion in mature osteoclasts (By similarity). Regulates insulin sensitivity through calcium/calmodulin signaling pathway by regulating AKT1 activation and NOS3 activation in endothelial cells (By similarity). May play a role in synaptic transmission by modulating calcium and proton dynamics at the synaptic vesicles.</text>
</comment>
<comment type="catalytic activity">
    <reaction evidence="2">
        <text>Ca(2+)(in) + ATP + H2O = Ca(2+)(out) + ADP + phosphate + H(+)</text>
        <dbReference type="Rhea" id="RHEA:18105"/>
        <dbReference type="ChEBI" id="CHEBI:15377"/>
        <dbReference type="ChEBI" id="CHEBI:15378"/>
        <dbReference type="ChEBI" id="CHEBI:29108"/>
        <dbReference type="ChEBI" id="CHEBI:30616"/>
        <dbReference type="ChEBI" id="CHEBI:43474"/>
        <dbReference type="ChEBI" id="CHEBI:456216"/>
        <dbReference type="EC" id="7.2.2.10"/>
    </reaction>
    <physiologicalReaction direction="left-to-right" evidence="2">
        <dbReference type="Rhea" id="RHEA:18106"/>
    </physiologicalReaction>
</comment>
<comment type="subunit">
    <text evidence="2 4">Monomer. Dimer. Oligomer. Calmodulin binding. Interacts with PDZD11. Interacts with SLC35G1 and STIM1. Interacts with YWHAE; interacts with the monomeric and dimeric forms of the YWHAE but prefer the monomer form; this interaction inhibits calcium-transporting ATPase activity (By similarity). Interacts with NPTN; this interaction stabilizes ATP2B1 and increases ATPase activity; this interaction controls T cell calcium homeostasis following T cell activation. Interacts with EPB41; regulates small intestinal calcium absorption through regulation of membrane expression of ATP2B1 (By similarity).</text>
</comment>
<comment type="subcellular location">
    <subcellularLocation>
        <location evidence="4">Cell membrane</location>
        <topology evidence="6">Multi-pass membrane protein</topology>
    </subcellularLocation>
    <subcellularLocation>
        <location evidence="2">Basolateral cell membrane</location>
    </subcellularLocation>
    <subcellularLocation>
        <location evidence="2">Synapse</location>
    </subcellularLocation>
    <subcellularLocation>
        <location evidence="2">Presynaptic cell membrane</location>
        <topology evidence="6">Multi-pass membrane protein</topology>
    </subcellularLocation>
    <subcellularLocation>
        <location evidence="2">Cytoplasmic vesicle</location>
        <location evidence="2">Secretory vesicle</location>
        <location evidence="2">Synaptic vesicle membrane</location>
        <topology evidence="6">Multi-pass membrane protein</topology>
    </subcellularLocation>
    <text evidence="2">Colocalizes with SV2A in photoreceptor synaptic terminals. Colocalizes with NPTN to the immunological synapse. Colocalizes with EPB41 to the basolateral membrane in enterocyte. Preferentially sorted to recycling synaptic vesicles.</text>
</comment>
<comment type="alternative products">
    <event type="alternative splicing"/>
    <isoform>
        <id>Q00804-3</id>
        <name>B</name>
        <name>CI</name>
        <sequence type="displayed"/>
    </isoform>
    <isoform>
        <id>Q00804-1</id>
        <name>C</name>
        <name>CIII</name>
        <sequence type="described" ref="VSP_059777"/>
    </isoform>
    <isoform>
        <id>Q00804-2</id>
        <name>A</name>
        <name>CII</name>
        <sequence type="described" ref="VSP_059778 VSP_059779"/>
    </isoform>
</comment>
<comment type="tissue specificity">
    <text>Isoform B is ubiquitously expressed and is the most predominant isoform. Isoform C is expressed at much lower levels in all tissues tested, but liver, while isoform A is found only in aorta, brain and stomach.</text>
</comment>
<comment type="domain">
    <text evidence="4">Isoforms A and C contain and additional calmodulin-binding subdomain B which is different in the different splice variants and shows pH dependent calmodulin binding properties.</text>
</comment>
<comment type="similarity">
    <text evidence="8">Belongs to the cation transport ATPase (P-type) (TC 3.A.3) family. Type IIB subfamily.</text>
</comment>
<protein>
    <recommendedName>
        <fullName evidence="4">Plasma membrane calcium-transporting ATPase 1</fullName>
        <ecNumber evidence="2">7.2.2.10</ecNumber>
    </recommendedName>
    <alternativeName>
        <fullName evidence="4">Plasma membrane calcium ATPase isoform 1</fullName>
        <shortName evidence="4">PMCA1</shortName>
    </alternativeName>
    <alternativeName>
        <fullName>Plasma membrane calcium pump isoform 1</fullName>
    </alternativeName>
</protein>
<evidence type="ECO:0000250" key="1"/>
<evidence type="ECO:0000250" key="2">
    <source>
        <dbReference type="UniProtKB" id="G5E829"/>
    </source>
</evidence>
<evidence type="ECO:0000250" key="3">
    <source>
        <dbReference type="UniProtKB" id="P11505"/>
    </source>
</evidence>
<evidence type="ECO:0000250" key="4">
    <source>
        <dbReference type="UniProtKB" id="P20020"/>
    </source>
</evidence>
<evidence type="ECO:0000250" key="5">
    <source>
        <dbReference type="UniProtKB" id="Q5ZWR1"/>
    </source>
</evidence>
<evidence type="ECO:0000255" key="6"/>
<evidence type="ECO:0000256" key="7">
    <source>
        <dbReference type="SAM" id="MobiDB-lite"/>
    </source>
</evidence>
<evidence type="ECO:0000305" key="8"/>
<keyword id="KW-0007">Acetylation</keyword>
<keyword id="KW-0025">Alternative splicing</keyword>
<keyword id="KW-0067">ATP-binding</keyword>
<keyword id="KW-0106">Calcium</keyword>
<keyword id="KW-0109">Calcium transport</keyword>
<keyword id="KW-0112">Calmodulin-binding</keyword>
<keyword id="KW-1003">Cell membrane</keyword>
<keyword id="KW-0966">Cell projection</keyword>
<keyword id="KW-0968">Cytoplasmic vesicle</keyword>
<keyword id="KW-0406">Ion transport</keyword>
<keyword id="KW-0460">Magnesium</keyword>
<keyword id="KW-0472">Membrane</keyword>
<keyword id="KW-0479">Metal-binding</keyword>
<keyword id="KW-0547">Nucleotide-binding</keyword>
<keyword id="KW-0597">Phosphoprotein</keyword>
<keyword id="KW-1185">Reference proteome</keyword>
<keyword id="KW-0770">Synapse</keyword>
<keyword id="KW-1278">Translocase</keyword>
<keyword id="KW-0812">Transmembrane</keyword>
<keyword id="KW-1133">Transmembrane helix</keyword>
<keyword id="KW-0813">Transport</keyword>
<proteinExistence type="evidence at transcript level"/>
<feature type="initiator methionine" description="Removed" evidence="4">
    <location>
        <position position="1"/>
    </location>
</feature>
<feature type="chain" id="PRO_0000046211" description="Plasma membrane calcium-transporting ATPase 1">
    <location>
        <begin position="2"/>
        <end position="1220"/>
    </location>
</feature>
<feature type="topological domain" description="Cytoplasmic" evidence="8">
    <location>
        <begin position="2"/>
        <end position="105"/>
    </location>
</feature>
<feature type="transmembrane region" description="Helical" evidence="4">
    <location>
        <begin position="106"/>
        <end position="126"/>
    </location>
</feature>
<feature type="topological domain" description="Extracellular" evidence="8">
    <location>
        <begin position="127"/>
        <end position="154"/>
    </location>
</feature>
<feature type="transmembrane region" description="Helical" evidence="4">
    <location>
        <begin position="155"/>
        <end position="175"/>
    </location>
</feature>
<feature type="topological domain" description="Cytoplasmic" evidence="8">
    <location>
        <begin position="176"/>
        <end position="366"/>
    </location>
</feature>
<feature type="transmembrane region" description="Helical" evidence="4">
    <location>
        <begin position="367"/>
        <end position="386"/>
    </location>
</feature>
<feature type="topological domain" description="Extracellular" evidence="8">
    <location>
        <begin position="387"/>
        <end position="418"/>
    </location>
</feature>
<feature type="transmembrane region" description="Helical" evidence="6">
    <location>
        <begin position="419"/>
        <end position="439"/>
    </location>
</feature>
<feature type="topological domain" description="Cytoplasmic" evidence="8">
    <location>
        <begin position="440"/>
        <end position="855"/>
    </location>
</feature>
<feature type="transmembrane region" description="Helical" evidence="6">
    <location>
        <begin position="856"/>
        <end position="876"/>
    </location>
</feature>
<feature type="topological domain" description="Extracellular" evidence="8">
    <location>
        <begin position="877"/>
        <end position="882"/>
    </location>
</feature>
<feature type="transmembrane region" description="Helical" evidence="6">
    <location>
        <begin position="883"/>
        <end position="903"/>
    </location>
</feature>
<feature type="topological domain" description="Cytoplasmic" evidence="8">
    <location>
        <begin position="904"/>
        <end position="927"/>
    </location>
</feature>
<feature type="transmembrane region" description="Helical" evidence="4">
    <location>
        <begin position="928"/>
        <end position="948"/>
    </location>
</feature>
<feature type="topological domain" description="Extracellular" evidence="8">
    <location>
        <begin position="949"/>
        <end position="971"/>
    </location>
</feature>
<feature type="transmembrane region" description="Helical" evidence="4">
    <location>
        <begin position="972"/>
        <end position="991"/>
    </location>
</feature>
<feature type="topological domain" description="Cytoplasmic" evidence="8">
    <location>
        <begin position="992"/>
        <end position="1005"/>
    </location>
</feature>
<feature type="transmembrane region" description="Helical" evidence="4">
    <location>
        <begin position="1006"/>
        <end position="1027"/>
    </location>
</feature>
<feature type="topological domain" description="Extracellular" evidence="8">
    <location>
        <begin position="1028"/>
        <end position="1039"/>
    </location>
</feature>
<feature type="transmembrane region" description="Helical" evidence="4">
    <location>
        <begin position="1040"/>
        <end position="1060"/>
    </location>
</feature>
<feature type="topological domain" description="Cytoplasmic" evidence="8">
    <location>
        <begin position="1061"/>
        <end position="1220"/>
    </location>
</feature>
<feature type="region of interest" description="Disordered" evidence="7">
    <location>
        <begin position="297"/>
        <end position="356"/>
    </location>
</feature>
<feature type="region of interest" description="Calmodulin-binding subdomain A" evidence="1">
    <location>
        <begin position="1100"/>
        <end position="1117"/>
    </location>
</feature>
<feature type="region of interest" description="Required for basolateral membrane targeting" evidence="3">
    <location>
        <begin position="1118"/>
        <end position="1220"/>
    </location>
</feature>
<feature type="region of interest" description="Disordered" evidence="7">
    <location>
        <begin position="1160"/>
        <end position="1220"/>
    </location>
</feature>
<feature type="compositionally biased region" description="Basic and acidic residues" evidence="7">
    <location>
        <begin position="312"/>
        <end position="327"/>
    </location>
</feature>
<feature type="compositionally biased region" description="Basic and acidic residues" evidence="7">
    <location>
        <begin position="337"/>
        <end position="356"/>
    </location>
</feature>
<feature type="compositionally biased region" description="Polar residues" evidence="7">
    <location>
        <begin position="1200"/>
        <end position="1220"/>
    </location>
</feature>
<feature type="active site" description="4-aspartylphosphate intermediate" evidence="5">
    <location>
        <position position="475"/>
    </location>
</feature>
<feature type="binding site" evidence="5">
    <location>
        <position position="475"/>
    </location>
    <ligand>
        <name>Mg(2+)</name>
        <dbReference type="ChEBI" id="CHEBI:18420"/>
    </ligand>
</feature>
<feature type="binding site" evidence="5">
    <location>
        <position position="477"/>
    </location>
    <ligand>
        <name>Mg(2+)</name>
        <dbReference type="ChEBI" id="CHEBI:18420"/>
    </ligand>
</feature>
<feature type="binding site" evidence="5">
    <location>
        <position position="797"/>
    </location>
    <ligand>
        <name>Mg(2+)</name>
        <dbReference type="ChEBI" id="CHEBI:18420"/>
    </ligand>
</feature>
<feature type="modified residue" description="N-acetylglycine" evidence="4">
    <location>
        <position position="2"/>
    </location>
</feature>
<feature type="modified residue" description="Phosphoserine" evidence="4">
    <location>
        <position position="8"/>
    </location>
</feature>
<feature type="modified residue" description="Phosphoserine" evidence="4">
    <location>
        <position position="17"/>
    </location>
</feature>
<feature type="modified residue" description="Phosphoserine" evidence="2">
    <location>
        <position position="338"/>
    </location>
</feature>
<feature type="modified residue" description="Phosphothreonine; by PKC" evidence="4">
    <location>
        <position position="1116"/>
    </location>
</feature>
<feature type="modified residue" description="Phosphoserine" evidence="3">
    <location>
        <position position="1140"/>
    </location>
</feature>
<feature type="modified residue" description="Phosphoserine" evidence="4">
    <location>
        <position position="1155"/>
    </location>
</feature>
<feature type="modified residue" description="Phosphothreonine" evidence="4">
    <location>
        <position position="1165"/>
    </location>
</feature>
<feature type="modified residue" description="Phosphoserine; by PKA" evidence="1">
    <location>
        <position position="1177"/>
    </location>
</feature>
<feature type="modified residue" description="Phosphoserine" evidence="4">
    <location>
        <position position="1178"/>
    </location>
</feature>
<feature type="modified residue" description="Phosphoserine" evidence="4">
    <location>
        <position position="1182"/>
    </location>
</feature>
<feature type="splice variant" id="VSP_059777" description="In isoform C.">
    <original>Q</original>
    <variation>QMDVVNAFQSGSSIQGALRRQPSIASQHHD</variation>
    <location>
        <position position="1117"/>
    </location>
</feature>
<feature type="splice variant" id="VSP_059778" description="In isoform A.">
    <original>IR</original>
    <variation>MD</variation>
    <location>
        <begin position="1118"/>
        <end position="1119"/>
    </location>
</feature>
<feature type="splice variant" id="VSP_059779" description="In isoform A.">
    <original>RSSLYEGLEKPESRSSIHNFMTHPEFRIEDSEPHIPLIDDTDAEDDAPTKRNSSPPPSPNKNNNLVDSGIHLTIEMNKSATSSSPGSPLHSLETSL</original>
    <variation>QSGSSIQGALRRQPSIASQHHDVTNISTPTHVVFSSSTASTTVGYSSGECIS</variation>
    <location>
        <begin position="1125"/>
        <end position="1220"/>
    </location>
</feature>
<accession>Q00804</accession>
<gene>
    <name evidence="4" type="primary">ATP2B1</name>
    <name type="synonym">PMCA1</name>
</gene>
<sequence length="1220" mass="134651">MGDMANNSVVYGGVKNSLKEANHDGDFGITLAAVRALMELRSTDALRKILESYGDVYGICTKLKTSPNEGLRGNPADLERREAVFGKNFIPPKKPKTFLQLVWEALQDVTLIILEIAAIVSLGLSFYQPPEGDNALCGEVSVGEEEGEGETGWIEGAAILLSVVCVVLVTAFNDWSKEKQFRGLQSRIEQEQKFTVIRGGQVIQIPVSDITVGDIAQVKYGDLLPADGILIQGNDLKIDESSLTGESDHVKKSLDKDPLLLSGTHVMEGSGRMVVTAVGVNSQTGIIFTLLGAGGEEEEKKDEKKKEKKNKKQDGAIENRNKAKAQDGEPMEMQPLKSEEGGDGDEKDKKKANLPKKEKSVLQGKLTKLAVQIGKAGLLMSAITVIILVLYFLIDTFWVQKRPWLAECTPIYIQYFVKFFIIGVTVLVVAVPEGLPLPVTISLAYSVNEMMKDNNLVRHLDACETMGNATAICSDKTGTLTMNRMAVVQAYINEKHYKKVPEPEPYPPNILSYLVTGISVNCAYTSKILPPEEEGGLPRIVGNKTECALLGPLLDLKQDYQDVRNEIPEEALYKVYTFQSVRKSMSTVLKNSDGSFRIFSKGASEIILKKCFKILSANGEAKVFRPRDRDDIVKTVIEPMASEGLRTICLAFRDFPAGEPEPEWDNENDIVTGLTCIAVVGIEDPGRPEVADAIKKCQRAGITVEVVTGDNINTARAIATKCGILHPGEDFLCLEGKDFNRRIRNEKGEIEQESIDKIWPKLRVLARSSPTDKHTLVKGIIDSTVSEQRQVVAVTGDGTNDGPALKKADGGFAMGIAGTDVAKEASDIILTDDNFTSIVKAVMWGRNVYDSISKFLQFQLTVNVVAVIVAFTGACITQDSPLKAVQMLWVNLIMDTLASLALATEPPTESLLLGKPYGRNKPLISRTMMKNILGHAFYQLVVVFTLLLAGEKFFDIDSGRNAPLHAPPSEHYTIVFNIFVLMQLFNEINARKIHGERNVFEGIFNNAIFCTIVLGTFVVQIIIVQFAGKPFSCSELSVEQWLWSIFLGMGTLLWGQLISTIPTSRLKFQKEVVHGTQKREIGEEELAEDVEEIVHAERELRRWQILWFRGLNRIQTQIRVVNAFRSSLYEGLEKPESRSSIHNFMTHPEFRIEDSEPHIPLIDDTDAEDDAPTKRNSSPPPSPNKNNNLVDSGIHLTIEMNKSATSSSPGSPLHSLETSL</sequence>
<reference key="1">
    <citation type="journal article" date="1991" name="Biochem. J.">
        <title>Expression of cyclic-nucleotide-sensitive and -insensitive isoforms of the plasma membrane Ca2+ pump in smooth muscle and other tissues.</title>
        <authorList>
            <person name="Khan I."/>
            <person name="Grover A.K."/>
        </authorList>
    </citation>
    <scope>NUCLEOTIDE SEQUENCE [MRNA]</scope>
    <scope>ALTERNATIVE SPLICING</scope>
    <source>
        <strain>Albino</strain>
        <tissue>Stomach smooth muscle</tissue>
    </source>
</reference>
<dbReference type="EC" id="7.2.2.10" evidence="2"/>
<dbReference type="EMBL" id="X59069">
    <property type="protein sequence ID" value="CAA41792.1"/>
    <property type="molecule type" value="mRNA"/>
</dbReference>
<dbReference type="PIR" id="S17179">
    <property type="entry name" value="S17179"/>
</dbReference>
<dbReference type="RefSeq" id="NP_001095189.1">
    <molecule id="Q00804-3"/>
    <property type="nucleotide sequence ID" value="NM_001101719.1"/>
</dbReference>
<dbReference type="SMR" id="Q00804"/>
<dbReference type="STRING" id="9986.ENSOCUP00000048695"/>
<dbReference type="PaxDb" id="9986-ENSOCUP00000014188"/>
<dbReference type="GeneID" id="100009543"/>
<dbReference type="KEGG" id="ocu:100009543"/>
<dbReference type="CTD" id="490"/>
<dbReference type="eggNOG" id="KOG0204">
    <property type="taxonomic scope" value="Eukaryota"/>
</dbReference>
<dbReference type="InParanoid" id="Q00804"/>
<dbReference type="OrthoDB" id="116380at2759"/>
<dbReference type="Proteomes" id="UP000001811">
    <property type="component" value="Unplaced"/>
</dbReference>
<dbReference type="GO" id="GO:0016323">
    <property type="term" value="C:basolateral plasma membrane"/>
    <property type="evidence" value="ECO:0000250"/>
    <property type="project" value="UniProtKB"/>
</dbReference>
<dbReference type="GO" id="GO:0042995">
    <property type="term" value="C:cell projection"/>
    <property type="evidence" value="ECO:0007669"/>
    <property type="project" value="UniProtKB-KW"/>
</dbReference>
<dbReference type="GO" id="GO:0001772">
    <property type="term" value="C:immunological synapse"/>
    <property type="evidence" value="ECO:0000250"/>
    <property type="project" value="UniProtKB"/>
</dbReference>
<dbReference type="GO" id="GO:0042734">
    <property type="term" value="C:presynaptic membrane"/>
    <property type="evidence" value="ECO:0000250"/>
    <property type="project" value="UniProtKB"/>
</dbReference>
<dbReference type="GO" id="GO:0030672">
    <property type="term" value="C:synaptic vesicle membrane"/>
    <property type="evidence" value="ECO:0000250"/>
    <property type="project" value="UniProtKB"/>
</dbReference>
<dbReference type="GO" id="GO:0005524">
    <property type="term" value="F:ATP binding"/>
    <property type="evidence" value="ECO:0007669"/>
    <property type="project" value="UniProtKB-KW"/>
</dbReference>
<dbReference type="GO" id="GO:0016887">
    <property type="term" value="F:ATP hydrolysis activity"/>
    <property type="evidence" value="ECO:0000250"/>
    <property type="project" value="UniProtKB"/>
</dbReference>
<dbReference type="GO" id="GO:0005516">
    <property type="term" value="F:calmodulin binding"/>
    <property type="evidence" value="ECO:0007669"/>
    <property type="project" value="UniProtKB-KW"/>
</dbReference>
<dbReference type="GO" id="GO:0046872">
    <property type="term" value="F:metal ion binding"/>
    <property type="evidence" value="ECO:0007669"/>
    <property type="project" value="UniProtKB-KW"/>
</dbReference>
<dbReference type="GO" id="GO:0005388">
    <property type="term" value="F:P-type calcium transporter activity"/>
    <property type="evidence" value="ECO:0007669"/>
    <property type="project" value="UniProtKB-EC"/>
</dbReference>
<dbReference type="GO" id="GO:0030165">
    <property type="term" value="F:PDZ domain binding"/>
    <property type="evidence" value="ECO:0007669"/>
    <property type="project" value="TreeGrafter"/>
</dbReference>
<dbReference type="GO" id="GO:0006874">
    <property type="term" value="P:intracellular calcium ion homeostasis"/>
    <property type="evidence" value="ECO:0000250"/>
    <property type="project" value="UniProtKB"/>
</dbReference>
<dbReference type="GO" id="GO:0001818">
    <property type="term" value="P:negative regulation of cytokine production"/>
    <property type="evidence" value="ECO:0000250"/>
    <property type="project" value="UniProtKB"/>
</dbReference>
<dbReference type="GO" id="GO:0051481">
    <property type="term" value="P:negative regulation of cytosolic calcium ion concentration"/>
    <property type="evidence" value="ECO:0000250"/>
    <property type="project" value="UniProtKB"/>
</dbReference>
<dbReference type="GO" id="GO:0030501">
    <property type="term" value="P:positive regulation of bone mineralization"/>
    <property type="evidence" value="ECO:0000250"/>
    <property type="project" value="UniProtKB"/>
</dbReference>
<dbReference type="GO" id="GO:0051928">
    <property type="term" value="P:positive regulation of calcium ion transport"/>
    <property type="evidence" value="ECO:0000250"/>
    <property type="project" value="UniProtKB"/>
</dbReference>
<dbReference type="GO" id="GO:0008217">
    <property type="term" value="P:regulation of blood pressure"/>
    <property type="evidence" value="ECO:0000250"/>
    <property type="project" value="UniProtKB"/>
</dbReference>
<dbReference type="GO" id="GO:1900076">
    <property type="term" value="P:regulation of cellular response to insulin stimulus"/>
    <property type="evidence" value="ECO:0000250"/>
    <property type="project" value="UniProtKB"/>
</dbReference>
<dbReference type="GO" id="GO:0051480">
    <property type="term" value="P:regulation of cytosolic calcium ion concentration"/>
    <property type="evidence" value="ECO:0000250"/>
    <property type="project" value="UniProtKB"/>
</dbReference>
<dbReference type="GO" id="GO:0003056">
    <property type="term" value="P:regulation of vascular associated smooth muscle contraction"/>
    <property type="evidence" value="ECO:0000250"/>
    <property type="project" value="UniProtKB"/>
</dbReference>
<dbReference type="CDD" id="cd02081">
    <property type="entry name" value="P-type_ATPase_Ca_PMCA-like"/>
    <property type="match status" value="1"/>
</dbReference>
<dbReference type="FunFam" id="1.20.1110.10:FF:000001">
    <property type="entry name" value="Calcium-transporting ATPase"/>
    <property type="match status" value="1"/>
</dbReference>
<dbReference type="FunFam" id="1.20.1110.10:FF:000002">
    <property type="entry name" value="Calcium-transporting ATPase"/>
    <property type="match status" value="1"/>
</dbReference>
<dbReference type="FunFam" id="1.20.1110.10:FF:000008">
    <property type="entry name" value="Calcium-transporting ATPase"/>
    <property type="match status" value="1"/>
</dbReference>
<dbReference type="FunFam" id="2.70.150.10:FF:000001">
    <property type="entry name" value="Calcium-transporting ATPase"/>
    <property type="match status" value="1"/>
</dbReference>
<dbReference type="FunFam" id="3.40.1110.10:FF:000002">
    <property type="entry name" value="Calcium-transporting ATPase"/>
    <property type="match status" value="1"/>
</dbReference>
<dbReference type="FunFam" id="3.40.50.1000:FF:000007">
    <property type="entry name" value="Calcium-transporting ATPase"/>
    <property type="match status" value="1"/>
</dbReference>
<dbReference type="Gene3D" id="3.40.1110.10">
    <property type="entry name" value="Calcium-transporting ATPase, cytoplasmic domain N"/>
    <property type="match status" value="1"/>
</dbReference>
<dbReference type="Gene3D" id="2.70.150.10">
    <property type="entry name" value="Calcium-transporting ATPase, cytoplasmic transduction domain A"/>
    <property type="match status" value="1"/>
</dbReference>
<dbReference type="Gene3D" id="1.20.1110.10">
    <property type="entry name" value="Calcium-transporting ATPase, transmembrane domain"/>
    <property type="match status" value="2"/>
</dbReference>
<dbReference type="Gene3D" id="3.40.50.1000">
    <property type="entry name" value="HAD superfamily/HAD-like"/>
    <property type="match status" value="1"/>
</dbReference>
<dbReference type="InterPro" id="IPR022141">
    <property type="entry name" value="ATP_Ca_trans_C"/>
</dbReference>
<dbReference type="InterPro" id="IPR006068">
    <property type="entry name" value="ATPase_P-typ_cation-transptr_C"/>
</dbReference>
<dbReference type="InterPro" id="IPR004014">
    <property type="entry name" value="ATPase_P-typ_cation-transptr_N"/>
</dbReference>
<dbReference type="InterPro" id="IPR023299">
    <property type="entry name" value="ATPase_P-typ_cyto_dom_N"/>
</dbReference>
<dbReference type="InterPro" id="IPR018303">
    <property type="entry name" value="ATPase_P-typ_P_site"/>
</dbReference>
<dbReference type="InterPro" id="IPR023298">
    <property type="entry name" value="ATPase_P-typ_TM_dom_sf"/>
</dbReference>
<dbReference type="InterPro" id="IPR008250">
    <property type="entry name" value="ATPase_P-typ_transduc_dom_A_sf"/>
</dbReference>
<dbReference type="InterPro" id="IPR036412">
    <property type="entry name" value="HAD-like_sf"/>
</dbReference>
<dbReference type="InterPro" id="IPR023214">
    <property type="entry name" value="HAD_sf"/>
</dbReference>
<dbReference type="InterPro" id="IPR006408">
    <property type="entry name" value="P-type_ATPase_IIB"/>
</dbReference>
<dbReference type="InterPro" id="IPR001757">
    <property type="entry name" value="P_typ_ATPase"/>
</dbReference>
<dbReference type="InterPro" id="IPR044492">
    <property type="entry name" value="P_typ_ATPase_HD_dom"/>
</dbReference>
<dbReference type="NCBIfam" id="TIGR01517">
    <property type="entry name" value="ATPase-IIB_Ca"/>
    <property type="match status" value="1"/>
</dbReference>
<dbReference type="NCBIfam" id="TIGR01494">
    <property type="entry name" value="ATPase_P-type"/>
    <property type="match status" value="3"/>
</dbReference>
<dbReference type="PANTHER" id="PTHR24093">
    <property type="entry name" value="CATION TRANSPORTING ATPASE"/>
    <property type="match status" value="1"/>
</dbReference>
<dbReference type="PANTHER" id="PTHR24093:SF245">
    <property type="entry name" value="PLASMA MEMBRANE CALCIUM-TRANSPORTING ATPASE 1"/>
    <property type="match status" value="1"/>
</dbReference>
<dbReference type="Pfam" id="PF12424">
    <property type="entry name" value="ATP_Ca_trans_C"/>
    <property type="match status" value="1"/>
</dbReference>
<dbReference type="Pfam" id="PF13246">
    <property type="entry name" value="Cation_ATPase"/>
    <property type="match status" value="1"/>
</dbReference>
<dbReference type="Pfam" id="PF00689">
    <property type="entry name" value="Cation_ATPase_C"/>
    <property type="match status" value="1"/>
</dbReference>
<dbReference type="Pfam" id="PF00690">
    <property type="entry name" value="Cation_ATPase_N"/>
    <property type="match status" value="1"/>
</dbReference>
<dbReference type="Pfam" id="PF00122">
    <property type="entry name" value="E1-E2_ATPase"/>
    <property type="match status" value="1"/>
</dbReference>
<dbReference type="Pfam" id="PF00702">
    <property type="entry name" value="Hydrolase"/>
    <property type="match status" value="1"/>
</dbReference>
<dbReference type="PRINTS" id="PR00119">
    <property type="entry name" value="CATATPASE"/>
</dbReference>
<dbReference type="PRINTS" id="PR00121">
    <property type="entry name" value="NAKATPASE"/>
</dbReference>
<dbReference type="SFLD" id="SFLDG00002">
    <property type="entry name" value="C1.7:_P-type_atpase_like"/>
    <property type="match status" value="1"/>
</dbReference>
<dbReference type="SFLD" id="SFLDF00027">
    <property type="entry name" value="p-type_atpase"/>
    <property type="match status" value="1"/>
</dbReference>
<dbReference type="SMART" id="SM00831">
    <property type="entry name" value="Cation_ATPase_N"/>
    <property type="match status" value="1"/>
</dbReference>
<dbReference type="SUPFAM" id="SSF81653">
    <property type="entry name" value="Calcium ATPase, transduction domain A"/>
    <property type="match status" value="1"/>
</dbReference>
<dbReference type="SUPFAM" id="SSF81665">
    <property type="entry name" value="Calcium ATPase, transmembrane domain M"/>
    <property type="match status" value="1"/>
</dbReference>
<dbReference type="SUPFAM" id="SSF56784">
    <property type="entry name" value="HAD-like"/>
    <property type="match status" value="1"/>
</dbReference>
<dbReference type="SUPFAM" id="SSF81660">
    <property type="entry name" value="Metal cation-transporting ATPase, ATP-binding domain N"/>
    <property type="match status" value="1"/>
</dbReference>
<dbReference type="PROSITE" id="PS00154">
    <property type="entry name" value="ATPASE_E1_E2"/>
    <property type="match status" value="1"/>
</dbReference>
<organism>
    <name type="scientific">Oryctolagus cuniculus</name>
    <name type="common">Rabbit</name>
    <dbReference type="NCBI Taxonomy" id="9986"/>
    <lineage>
        <taxon>Eukaryota</taxon>
        <taxon>Metazoa</taxon>
        <taxon>Chordata</taxon>
        <taxon>Craniata</taxon>
        <taxon>Vertebrata</taxon>
        <taxon>Euteleostomi</taxon>
        <taxon>Mammalia</taxon>
        <taxon>Eutheria</taxon>
        <taxon>Euarchontoglires</taxon>
        <taxon>Glires</taxon>
        <taxon>Lagomorpha</taxon>
        <taxon>Leporidae</taxon>
        <taxon>Oryctolagus</taxon>
    </lineage>
</organism>
<name>AT2B1_RABIT</name>